<keyword id="KW-0004">4Fe-4S</keyword>
<keyword id="KW-0150">Chloroplast</keyword>
<keyword id="KW-0408">Iron</keyword>
<keyword id="KW-0411">Iron-sulfur</keyword>
<keyword id="KW-0472">Membrane</keyword>
<keyword id="KW-0479">Metal-binding</keyword>
<keyword id="KW-0520">NAD</keyword>
<keyword id="KW-0521">NADP</keyword>
<keyword id="KW-0934">Plastid</keyword>
<keyword id="KW-0618">Plastoquinone</keyword>
<keyword id="KW-0874">Quinone</keyword>
<keyword id="KW-0677">Repeat</keyword>
<keyword id="KW-0793">Thylakoid</keyword>
<keyword id="KW-1278">Translocase</keyword>
<organism>
    <name type="scientific">Steiractinia sodiroi</name>
    <dbReference type="NCBI Taxonomy" id="183083"/>
    <lineage>
        <taxon>Eukaryota</taxon>
        <taxon>Viridiplantae</taxon>
        <taxon>Streptophyta</taxon>
        <taxon>Embryophyta</taxon>
        <taxon>Tracheophyta</taxon>
        <taxon>Spermatophyta</taxon>
        <taxon>Magnoliopsida</taxon>
        <taxon>eudicotyledons</taxon>
        <taxon>Gunneridae</taxon>
        <taxon>Pentapetalae</taxon>
        <taxon>asterids</taxon>
        <taxon>campanulids</taxon>
        <taxon>Asterales</taxon>
        <taxon>Asteraceae</taxon>
        <taxon>Asteroideae</taxon>
        <taxon>Heliantheae alliance</taxon>
        <taxon>Heliantheae</taxon>
        <taxon>Steiractinia</taxon>
    </lineage>
</organism>
<geneLocation type="chloroplast"/>
<accession>Q8HVK8</accession>
<name>NDHI_STESO</name>
<evidence type="ECO:0000255" key="1">
    <source>
        <dbReference type="HAMAP-Rule" id="MF_01351"/>
    </source>
</evidence>
<dbReference type="EC" id="7.1.1.-" evidence="1"/>
<dbReference type="EMBL" id="AF383855">
    <property type="protein sequence ID" value="AAN61796.1"/>
    <property type="molecule type" value="Genomic_DNA"/>
</dbReference>
<dbReference type="SMR" id="Q8HVK8"/>
<dbReference type="GO" id="GO:0009535">
    <property type="term" value="C:chloroplast thylakoid membrane"/>
    <property type="evidence" value="ECO:0007669"/>
    <property type="project" value="UniProtKB-SubCell"/>
</dbReference>
<dbReference type="GO" id="GO:0051539">
    <property type="term" value="F:4 iron, 4 sulfur cluster binding"/>
    <property type="evidence" value="ECO:0007669"/>
    <property type="project" value="UniProtKB-KW"/>
</dbReference>
<dbReference type="GO" id="GO:0005506">
    <property type="term" value="F:iron ion binding"/>
    <property type="evidence" value="ECO:0007669"/>
    <property type="project" value="UniProtKB-UniRule"/>
</dbReference>
<dbReference type="GO" id="GO:0008137">
    <property type="term" value="F:NADH dehydrogenase (ubiquinone) activity"/>
    <property type="evidence" value="ECO:0007669"/>
    <property type="project" value="InterPro"/>
</dbReference>
<dbReference type="GO" id="GO:0048038">
    <property type="term" value="F:quinone binding"/>
    <property type="evidence" value="ECO:0007669"/>
    <property type="project" value="UniProtKB-KW"/>
</dbReference>
<dbReference type="GO" id="GO:0019684">
    <property type="term" value="P:photosynthesis, light reaction"/>
    <property type="evidence" value="ECO:0007669"/>
    <property type="project" value="UniProtKB-UniRule"/>
</dbReference>
<dbReference type="FunFam" id="3.30.70.3270:FF:000006">
    <property type="entry name" value="NAD(P)H-quinone oxidoreductase subunit I, chloroplastic"/>
    <property type="match status" value="1"/>
</dbReference>
<dbReference type="Gene3D" id="3.30.70.3270">
    <property type="match status" value="1"/>
</dbReference>
<dbReference type="HAMAP" id="MF_01351">
    <property type="entry name" value="NDH1_NuoI"/>
    <property type="match status" value="1"/>
</dbReference>
<dbReference type="InterPro" id="IPR017896">
    <property type="entry name" value="4Fe4S_Fe-S-bd"/>
</dbReference>
<dbReference type="InterPro" id="IPR017900">
    <property type="entry name" value="4Fe4S_Fe_S_CS"/>
</dbReference>
<dbReference type="InterPro" id="IPR010226">
    <property type="entry name" value="NADH_quinone_OxRdtase_chainI"/>
</dbReference>
<dbReference type="InterPro" id="IPR004497">
    <property type="entry name" value="NDHI"/>
</dbReference>
<dbReference type="NCBIfam" id="TIGR00403">
    <property type="entry name" value="ndhI"/>
    <property type="match status" value="1"/>
</dbReference>
<dbReference type="NCBIfam" id="TIGR01971">
    <property type="entry name" value="NuoI"/>
    <property type="match status" value="1"/>
</dbReference>
<dbReference type="NCBIfam" id="NF004537">
    <property type="entry name" value="PRK05888.1-3"/>
    <property type="match status" value="1"/>
</dbReference>
<dbReference type="PANTHER" id="PTHR47275">
    <property type="entry name" value="NAD(P)H-QUINONE OXIDOREDUCTASE SUBUNIT I, CHLOROPLASTIC"/>
    <property type="match status" value="1"/>
</dbReference>
<dbReference type="PANTHER" id="PTHR47275:SF1">
    <property type="entry name" value="NAD(P)H-QUINONE OXIDOREDUCTASE SUBUNIT I, CHLOROPLASTIC"/>
    <property type="match status" value="1"/>
</dbReference>
<dbReference type="Pfam" id="PF13187">
    <property type="entry name" value="Fer4_9"/>
    <property type="match status" value="1"/>
</dbReference>
<dbReference type="SUPFAM" id="SSF54862">
    <property type="entry name" value="4Fe-4S ferredoxins"/>
    <property type="match status" value="1"/>
</dbReference>
<dbReference type="PROSITE" id="PS00198">
    <property type="entry name" value="4FE4S_FER_1"/>
    <property type="match status" value="2"/>
</dbReference>
<dbReference type="PROSITE" id="PS51379">
    <property type="entry name" value="4FE4S_FER_2"/>
    <property type="match status" value="2"/>
</dbReference>
<sequence>MFPMVTEFMNYGQQTIRAARYIGQGFMITLSHANRLPVTIQYPYEKLITSERFRGRIHFEFDKCIACEVCVRVCPMDLPVVDWKLETDIRKKRLLNYSIDFGICIFCGNCVEYCPTNCLSMTEEYELSTYDRHELNYNQIALGRLPMSIIDDYTIRTILNLPEIKT</sequence>
<reference key="1">
    <citation type="submission" date="2003-01" db="EMBL/GenBank/DDBJ databases">
        <title>Chloroplast DNA phylogeny of tribe Heliantheae (Asteraceae).</title>
        <authorList>
            <person name="Panero J.L."/>
            <person name="Baldwin B.G."/>
            <person name="Schilling E.E."/>
            <person name="Clevinger J.A."/>
        </authorList>
    </citation>
    <scope>NUCLEOTIDE SEQUENCE [GENOMIC DNA]</scope>
</reference>
<gene>
    <name evidence="1" type="primary">ndhI</name>
</gene>
<feature type="chain" id="PRO_0000250854" description="NAD(P)H-quinone oxidoreductase subunit I, chloroplastic">
    <location>
        <begin position="1"/>
        <end position="166"/>
    </location>
</feature>
<feature type="domain" description="4Fe-4S ferredoxin-type 1" evidence="1">
    <location>
        <begin position="55"/>
        <end position="84"/>
    </location>
</feature>
<feature type="domain" description="4Fe-4S ferredoxin-type 2" evidence="1">
    <location>
        <begin position="95"/>
        <end position="124"/>
    </location>
</feature>
<feature type="binding site" evidence="1">
    <location>
        <position position="64"/>
    </location>
    <ligand>
        <name>[4Fe-4S] cluster</name>
        <dbReference type="ChEBI" id="CHEBI:49883"/>
        <label>1</label>
    </ligand>
</feature>
<feature type="binding site" evidence="1">
    <location>
        <position position="67"/>
    </location>
    <ligand>
        <name>[4Fe-4S] cluster</name>
        <dbReference type="ChEBI" id="CHEBI:49883"/>
        <label>1</label>
    </ligand>
</feature>
<feature type="binding site" evidence="1">
    <location>
        <position position="70"/>
    </location>
    <ligand>
        <name>[4Fe-4S] cluster</name>
        <dbReference type="ChEBI" id="CHEBI:49883"/>
        <label>1</label>
    </ligand>
</feature>
<feature type="binding site" evidence="1">
    <location>
        <position position="74"/>
    </location>
    <ligand>
        <name>[4Fe-4S] cluster</name>
        <dbReference type="ChEBI" id="CHEBI:49883"/>
        <label>2</label>
    </ligand>
</feature>
<feature type="binding site" evidence="1">
    <location>
        <position position="104"/>
    </location>
    <ligand>
        <name>[4Fe-4S] cluster</name>
        <dbReference type="ChEBI" id="CHEBI:49883"/>
        <label>2</label>
    </ligand>
</feature>
<feature type="binding site" evidence="1">
    <location>
        <position position="107"/>
    </location>
    <ligand>
        <name>[4Fe-4S] cluster</name>
        <dbReference type="ChEBI" id="CHEBI:49883"/>
        <label>2</label>
    </ligand>
</feature>
<feature type="binding site" evidence="1">
    <location>
        <position position="110"/>
    </location>
    <ligand>
        <name>[4Fe-4S] cluster</name>
        <dbReference type="ChEBI" id="CHEBI:49883"/>
        <label>2</label>
    </ligand>
</feature>
<feature type="binding site" evidence="1">
    <location>
        <position position="114"/>
    </location>
    <ligand>
        <name>[4Fe-4S] cluster</name>
        <dbReference type="ChEBI" id="CHEBI:49883"/>
        <label>1</label>
    </ligand>
</feature>
<protein>
    <recommendedName>
        <fullName evidence="1">NAD(P)H-quinone oxidoreductase subunit I, chloroplastic</fullName>
        <ecNumber evidence="1">7.1.1.-</ecNumber>
    </recommendedName>
    <alternativeName>
        <fullName evidence="1">NAD(P)H dehydrogenase subunit I</fullName>
        <shortName evidence="1">NDH subunit I</shortName>
    </alternativeName>
    <alternativeName>
        <fullName evidence="1">NADH-plastoquinone oxidoreductase subunit I</fullName>
    </alternativeName>
</protein>
<proteinExistence type="inferred from homology"/>
<comment type="function">
    <text evidence="1">NDH shuttles electrons from NAD(P)H:plastoquinone, via FMN and iron-sulfur (Fe-S) centers, to quinones in the photosynthetic chain and possibly in a chloroplast respiratory chain. The immediate electron acceptor for the enzyme in this species is believed to be plastoquinone. Couples the redox reaction to proton translocation, and thus conserves the redox energy in a proton gradient.</text>
</comment>
<comment type="catalytic activity">
    <reaction evidence="1">
        <text>a plastoquinone + NADH + (n+1) H(+)(in) = a plastoquinol + NAD(+) + n H(+)(out)</text>
        <dbReference type="Rhea" id="RHEA:42608"/>
        <dbReference type="Rhea" id="RHEA-COMP:9561"/>
        <dbReference type="Rhea" id="RHEA-COMP:9562"/>
        <dbReference type="ChEBI" id="CHEBI:15378"/>
        <dbReference type="ChEBI" id="CHEBI:17757"/>
        <dbReference type="ChEBI" id="CHEBI:57540"/>
        <dbReference type="ChEBI" id="CHEBI:57945"/>
        <dbReference type="ChEBI" id="CHEBI:62192"/>
    </reaction>
</comment>
<comment type="catalytic activity">
    <reaction evidence="1">
        <text>a plastoquinone + NADPH + (n+1) H(+)(in) = a plastoquinol + NADP(+) + n H(+)(out)</text>
        <dbReference type="Rhea" id="RHEA:42612"/>
        <dbReference type="Rhea" id="RHEA-COMP:9561"/>
        <dbReference type="Rhea" id="RHEA-COMP:9562"/>
        <dbReference type="ChEBI" id="CHEBI:15378"/>
        <dbReference type="ChEBI" id="CHEBI:17757"/>
        <dbReference type="ChEBI" id="CHEBI:57783"/>
        <dbReference type="ChEBI" id="CHEBI:58349"/>
        <dbReference type="ChEBI" id="CHEBI:62192"/>
    </reaction>
</comment>
<comment type="cofactor">
    <cofactor evidence="1">
        <name>[4Fe-4S] cluster</name>
        <dbReference type="ChEBI" id="CHEBI:49883"/>
    </cofactor>
    <text evidence="1">Binds 2 [4Fe-4S] clusters per subunit.</text>
</comment>
<comment type="subunit">
    <text evidence="1">NDH is composed of at least 16 different subunits, 5 of which are encoded in the nucleus.</text>
</comment>
<comment type="subcellular location">
    <subcellularLocation>
        <location evidence="1">Plastid</location>
        <location evidence="1">Chloroplast thylakoid membrane</location>
        <topology evidence="1">Peripheral membrane protein</topology>
    </subcellularLocation>
</comment>
<comment type="similarity">
    <text evidence="1">Belongs to the complex I 23 kDa subunit family.</text>
</comment>